<sequence length="110" mass="12092">MFINGFVNYPVRTPPNDLLQVVLHGFLRCPLDGSQVDSIGIGHTVHGIVLPGKWVVLMCVLSFLEPPSRRYTFCEADLPYTKITARKAERPSQGGKDYNGTAKSAQSTTV</sequence>
<reference key="1">
    <citation type="journal article" date="1995" name="Proc. Natl. Acad. Sci. U.S.A.">
        <title>The nucleotide sequence of chromosome I from Saccharomyces cerevisiae.</title>
        <authorList>
            <person name="Bussey H."/>
            <person name="Kaback D.B."/>
            <person name="Zhong W.-W."/>
            <person name="Vo D.H."/>
            <person name="Clark M.W."/>
            <person name="Fortin N."/>
            <person name="Hall J."/>
            <person name="Ouellette B.F.F."/>
            <person name="Keng T."/>
            <person name="Barton A.B."/>
            <person name="Su Y."/>
            <person name="Davies C.J."/>
            <person name="Storms R.K."/>
        </authorList>
    </citation>
    <scope>NUCLEOTIDE SEQUENCE [LARGE SCALE GENOMIC DNA]</scope>
    <source>
        <strain>ATCC 204508 / S288c</strain>
    </source>
</reference>
<reference key="2">
    <citation type="journal article" date="2014" name="G3 (Bethesda)">
        <title>The reference genome sequence of Saccharomyces cerevisiae: Then and now.</title>
        <authorList>
            <person name="Engel S.R."/>
            <person name="Dietrich F.S."/>
            <person name="Fisk D.G."/>
            <person name="Binkley G."/>
            <person name="Balakrishnan R."/>
            <person name="Costanzo M.C."/>
            <person name="Dwight S.S."/>
            <person name="Hitz B.C."/>
            <person name="Karra K."/>
            <person name="Nash R.S."/>
            <person name="Weng S."/>
            <person name="Wong E.D."/>
            <person name="Lloyd P."/>
            <person name="Skrzypek M.S."/>
            <person name="Miyasato S.R."/>
            <person name="Simison M."/>
            <person name="Cherry J.M."/>
        </authorList>
    </citation>
    <scope>GENOME REANNOTATION</scope>
    <source>
        <strain>ATCC 204508 / S288c</strain>
    </source>
</reference>
<comment type="miscellaneous">
    <text evidence="2">Partially overlaps CDC15.</text>
</comment>
<comment type="caution">
    <text evidence="3">Product of a dubious gene prediction unlikely to encode a functional protein. Because of that it is not part of the S.cerevisiae S288c complete/reference proteome set.</text>
</comment>
<feature type="chain" id="PRO_0000430970" description="Putative uncharacterized protein YAR019W-A">
    <location>
        <begin position="1"/>
        <end position="110"/>
    </location>
</feature>
<feature type="region of interest" description="Disordered" evidence="1">
    <location>
        <begin position="85"/>
        <end position="110"/>
    </location>
</feature>
<feature type="compositionally biased region" description="Polar residues" evidence="1">
    <location>
        <begin position="101"/>
        <end position="110"/>
    </location>
</feature>
<proteinExistence type="uncertain"/>
<organism>
    <name type="scientific">Saccharomyces cerevisiae (strain ATCC 204508 / S288c)</name>
    <name type="common">Baker's yeast</name>
    <dbReference type="NCBI Taxonomy" id="559292"/>
    <lineage>
        <taxon>Eukaryota</taxon>
        <taxon>Fungi</taxon>
        <taxon>Dikarya</taxon>
        <taxon>Ascomycota</taxon>
        <taxon>Saccharomycotina</taxon>
        <taxon>Saccharomycetes</taxon>
        <taxon>Saccharomycetales</taxon>
        <taxon>Saccharomycetaceae</taxon>
        <taxon>Saccharomyces</taxon>
    </lineage>
</organism>
<dbReference type="EMBL" id="KJ412211">
    <property type="protein sequence ID" value="AHX39254.1"/>
    <property type="molecule type" value="Genomic_DNA"/>
</dbReference>
<dbReference type="PaxDb" id="4932-YAR019W-A"/>
<dbReference type="EnsemblFungi" id="YAR019W-A_mRNA">
    <property type="protein sequence ID" value="YAR019W-A"/>
    <property type="gene ID" value="YAR019W-A"/>
</dbReference>
<dbReference type="AGR" id="SGD:S000028735"/>
<dbReference type="SGD" id="S000028735">
    <property type="gene designation" value="YAR019W-A"/>
</dbReference>
<dbReference type="HOGENOM" id="CLU_2172516_0_0_1"/>
<evidence type="ECO:0000256" key="1">
    <source>
        <dbReference type="SAM" id="MobiDB-lite"/>
    </source>
</evidence>
<evidence type="ECO:0000305" key="2"/>
<evidence type="ECO:0000305" key="3">
    <source>
    </source>
</evidence>
<evidence type="ECO:0000312" key="4">
    <source>
        <dbReference type="SGD" id="S000028735"/>
    </source>
</evidence>
<protein>
    <recommendedName>
        <fullName evidence="2">Putative uncharacterized protein YAR019W-A</fullName>
    </recommendedName>
</protein>
<name>YA019_YEAST</name>
<gene>
    <name evidence="4" type="ordered locus">YAR019W-A</name>
</gene>
<accession>A0A023PXB0</accession>